<organism>
    <name type="scientific">Viola arvensis</name>
    <name type="common">European field pansy</name>
    <name type="synonym">Field violet</name>
    <dbReference type="NCBI Taxonomy" id="97415"/>
    <lineage>
        <taxon>Eukaryota</taxon>
        <taxon>Viridiplantae</taxon>
        <taxon>Streptophyta</taxon>
        <taxon>Embryophyta</taxon>
        <taxon>Tracheophyta</taxon>
        <taxon>Spermatophyta</taxon>
        <taxon>Magnoliopsida</taxon>
        <taxon>eudicotyledons</taxon>
        <taxon>Gunneridae</taxon>
        <taxon>Pentapetalae</taxon>
        <taxon>rosids</taxon>
        <taxon>fabids</taxon>
        <taxon>Malpighiales</taxon>
        <taxon>Violaceae</taxon>
        <taxon>Viola</taxon>
        <taxon>Viola subgen. Viola</taxon>
        <taxon>Viola sect. Melanium</taxon>
        <taxon>Viola subsect. Bracteolatae</taxon>
    </lineage>
</organism>
<name>VARD_VIOAR</name>
<sequence length="29" mass="2902">GLPICGETCVGGSCNTPGCSCSWPVCTRN</sequence>
<evidence type="ECO:0000255" key="1">
    <source>
        <dbReference type="PROSITE-ProRule" id="PRU00395"/>
    </source>
</evidence>
<evidence type="ECO:0000269" key="2">
    <source>
    </source>
</evidence>
<evidence type="ECO:0000305" key="3"/>
<comment type="function">
    <text>Probably participates in a plant defense mechanism.</text>
</comment>
<comment type="domain">
    <text>The presence of a 'disulfide through disulfide knot' structurally defines this protein as a knottin.</text>
</comment>
<comment type="PTM">
    <text>This is a cyclic peptide.</text>
</comment>
<comment type="mass spectrometry" mass="2879.0" error="3.0" method="MALDI" evidence="2"/>
<comment type="similarity">
    <text evidence="1">Belongs to the cyclotide family. Moebius subfamily.</text>
</comment>
<comment type="caution">
    <text evidence="3">This peptide is cyclic. The start position was chosen by similarity to OAK1 (kalata-B1) for which the DNA sequence is known.</text>
</comment>
<protein>
    <recommendedName>
        <fullName>Varv peptide D</fullName>
    </recommendedName>
</protein>
<accession>P58449</accession>
<dbReference type="SMR" id="P58449"/>
<dbReference type="GO" id="GO:0006952">
    <property type="term" value="P:defense response"/>
    <property type="evidence" value="ECO:0000250"/>
    <property type="project" value="UniProtKB"/>
</dbReference>
<dbReference type="InterPro" id="IPR005535">
    <property type="entry name" value="Cyclotide"/>
</dbReference>
<dbReference type="InterPro" id="IPR012324">
    <property type="entry name" value="Cyclotide_moebius_CS"/>
</dbReference>
<dbReference type="InterPro" id="IPR036146">
    <property type="entry name" value="Cyclotide_sf"/>
</dbReference>
<dbReference type="Pfam" id="PF03784">
    <property type="entry name" value="Cyclotide"/>
    <property type="match status" value="1"/>
</dbReference>
<dbReference type="PIRSF" id="PIRSF037891">
    <property type="entry name" value="Cycloviolacin"/>
    <property type="match status" value="1"/>
</dbReference>
<dbReference type="SUPFAM" id="SSF57038">
    <property type="entry name" value="Cyclotides"/>
    <property type="match status" value="1"/>
</dbReference>
<dbReference type="PROSITE" id="PS51052">
    <property type="entry name" value="CYCLOTIDE"/>
    <property type="match status" value="1"/>
</dbReference>
<dbReference type="PROSITE" id="PS60009">
    <property type="entry name" value="CYCLOTIDE_MOEBIUS"/>
    <property type="match status" value="1"/>
</dbReference>
<proteinExistence type="evidence at protein level"/>
<reference key="1">
    <citation type="journal article" date="1999" name="J. Nat. Prod.">
        <title>Seven novel macrocyclic polypeptides from Viola arvensis.</title>
        <authorList>
            <person name="Goeransson U."/>
            <person name="Luijendijk T."/>
            <person name="Johansson S."/>
            <person name="Bohlin L."/>
            <person name="Claeson P."/>
        </authorList>
    </citation>
    <scope>PROTEIN SEQUENCE</scope>
    <scope>MASS SPECTROMETRY</scope>
</reference>
<keyword id="KW-0903">Direct protein sequencing</keyword>
<keyword id="KW-1015">Disulfide bond</keyword>
<keyword id="KW-0960">Knottin</keyword>
<keyword id="KW-0611">Plant defense</keyword>
<feature type="peptide" id="PRO_0000043625" description="Varv peptide D">
    <location>
        <begin position="1"/>
        <end position="29"/>
    </location>
</feature>
<feature type="disulfide bond">
    <location>
        <begin position="5"/>
        <end position="19"/>
    </location>
</feature>
<feature type="disulfide bond">
    <location>
        <begin position="9"/>
        <end position="21"/>
    </location>
</feature>
<feature type="disulfide bond">
    <location>
        <begin position="14"/>
        <end position="26"/>
    </location>
</feature>
<feature type="cross-link" description="Cyclopeptide (Gly-Asn)">
    <location>
        <begin position="1"/>
        <end position="29"/>
    </location>
</feature>